<gene>
    <name evidence="14" type="primary">PIEZO2</name>
    <name type="synonym">C18orf30</name>
    <name type="synonym">C18orf58</name>
    <name type="synonym">FAM38B</name>
</gene>
<sequence>MASEVVCGLIFRLLLPICLAVACAFRYNGLSFVYLIYLLLIPLFSEPTKTTMQGHTGRLLKSLCFISLSFLLLHIIFHITLVSLEAQHRIAPGYNCSTWEKTFRQIGFESLKGADAGNGIRVFVPDIGMFIASLTIWLLCRNIVQKPVTDEAAQSNPEFENEELAEGEKIDSEEALIYEEDFNGGDGVEGELEESTKLKMFRRLASVASKLKEFIGNMITTAGKVVVTILLGSSGMMLPSLTSSVYFFVFLGLCTWWSWCRTFDPLLFSCLCVLLAIFTAGHLIGLYLYQFQFFQEAVPPNDYYARLFGIKSVIQTDCSSTWKIIVNPDLSWYHHANPILLLVMYYTLATLIRIWLQEPLVQDEGTKEEDKALACSPIQITAGRRRSLWYATHYPTDERKLLSMTQDDYKPSDGLLVTVNGNPVDYHTIHPSLPMENGPGKADLYSTPQYRWEPSDESSEKREEEEEEKEEFEEERSREEKRSIKVHAMVSVFQFIMKQSYICALIAMMAWSITYHSWLTFVLLIWSCTLWMIRNRRKYAMISSPFMVVYGNLLLILQYIWSFELPEIKKVPGFLEKKEPGELASKILFTITFWLLLRQHLTEQKALQEKEALLSEVKIGSQENEEKDEELQDIQVEGEPKEEEEEEAKEEKQERKKVEQEEAEEEDEQDIMKVLGNLVVAMFIKYWIYVCGGMFFFVSFEGKIVMYKIIYMVLFLFCVALYQVHYEWWRKILKYFWMSVVIYTMLVLIFIYTYQFENFPGLWQNMTGLKKEKLEDLGLKQFTVAELFTRIFIPTSFLLVCILHLHYFHDRFLELTDLKSIPSKEDNTIYRLAHPEGSLPDLTMMHLTASLEKPEVRKLAEPGEEKLEGYSEKAQKGDLGKDSEESEEDGEEEEESEEEEETSDLRNKWHLVIDRLTVLFLKFLEYFHKLQVFMWWILELHIIKIVSSYIIWVSVKEVSLFNYVFLISWAFALPYAKLRRLASSVCTVWTCVIIVCKMLYQLQTIKPENFSVNCSLPNENQTNIPFNELNKSLLYSAPIDPTEWVGLRKSSPLLVYLRNNLLMLAILAFEVTIYRHQEYYRGRNNLTAPVSRTIFHDITRLHLDDGLINCAKYFINYFFYKFGLETCFLMSVNVIGQRMDFYAMIHACWLIAVLYRRRRKAIAEIWPKYCCFLACIITFQYFICIGIPPAPCRDYPWRFKGASFNDNIIKWLYFPDFIVRPNPVFLVYDFMLLLCASLQRQIFEDENKAAVRIMAGDNVEICMNLDAASFSQHNPVPDFIHCRSYLDMSKVIIFSYLFWFVLTIIFITGTTRISIFCMGYLVACFYFLLFGGDLLLKPIKSILRYWDWLIAYNVFVITMKNILSIGACGYIGTLVHNSCWLIQAFSLACTVKGYQMPAANSPCTLPSGEAGIIWDSICFAFLLLQRRVFMSYYFLHVVADIKASQILASRGAELFQATIVKAVKARIEEEKKSMDQLKRQMDRIKARQQKYKKGKERMLSLTQEPGEGQDMQKLSEEDDEREADKQKAKGKKKQWWRPWVDHASMVRSGDYYLFETDSEEEEEEELKKEDEEPPRRSAFQFVYQAWITDPKTALRQRHKEKKRSAREERKRRRKGSKEGPVEWEDREDEPIKKKSDGPDNIIKRIFNILKFTWVLFLATVDSFTTWLNSISREHIDISTVLRIERCMLTREIKKGNVPTRESIHMYYQNHIMNLSRESGLDTIDEHPGAASGAQTAHRMDSLDSHDSISSEPTQCTMLYSRQGTTETIEEVEAEQEEEAGSTAPEPREAKEYEATGYDVGAMGAEEASLTPEEELTQFSTLDGDVEAPPSYSKAVSFEHLSFGSQDDSAGKNRMAVSPDDSRTDKLGSSILPPLTHELTASELLLKKMFHDDELEESEKFYVGQPRFLLLFYAMYNTLVARSEMVCYFVIILNHMVSASMITLLLPILIFLWAMLSVPRPSRRFWMMAIVYTEVAIVVKYFFQFGFFPWNKNVEVNKDKPYHPPNIIGVEKKEGYVLYDLIQLLALFFHRSILKCHGLWDEDDMTESGMAREESDDELSLGHGRRDSSDSLKSINLAASVESVHVTFPEQQTAVRRKRSGSSSEPSQRSSFSSNRSQRGSTSTRNSSQKGSSVLSIKQKGKRELYMEKLQEHLIKAKAFTIKKTLEIYVPIKQFFYNLIHPEYSAVTDVYVLMFLADTVDFIIIVFGFWAFGKHSAAADITSSLSEDQVPGPFLVMVLIQFGTMVVDRALYLRKTVLGKVIFQVILVFGIHFWMFFILPGVTERKFSQNLVAQLWYFVKCVYFGLSAYQIRCGYPTRVLGNFLTKSYNYVNLFLFQGFRLVPFLTELRAVMDWVWTDTTLSLSSWICVEDIYAHIFILKCWRESEKRYPQPRGQKKKKVVKYGMGGMIIVLLICIVWFPLLFMSLIKSVAGVINQPLDVSVTITLGGYQPIFTMSAQQSQLKVMDQQSFNKFIQAFSRDTGAMQFLENYEKEDITVAELEGNSNSLWTISPPSKQKMIHELLDPNSSFSVVFSWSIQRNLSLGAKSEIATDKLSFPLKNITRKNIAKMIAGNSTESSKTPVTIEKIYPYYVKAPSDSNSKPIKQLLSENNFMDITIILSRDNTTKYNSEWWVLNLTGNRIYNPNSQALELVVFNDKVSPPSLGFLAGYGIMGLYASVVLVIGKFVREFFSGISHSIMFEELPNVDRILKLCTDIFLVRETGELELEEDLYAKLIFLYRSPETMIKWTREKTN</sequence>
<evidence type="ECO:0000250" key="1">
    <source>
        <dbReference type="UniProtKB" id="Q8CD54"/>
    </source>
</evidence>
<evidence type="ECO:0000255" key="2"/>
<evidence type="ECO:0000256" key="3">
    <source>
        <dbReference type="SAM" id="MobiDB-lite"/>
    </source>
</evidence>
<evidence type="ECO:0000269" key="4">
    <source>
    </source>
</evidence>
<evidence type="ECO:0000269" key="5">
    <source>
    </source>
</evidence>
<evidence type="ECO:0000269" key="6">
    <source>
    </source>
</evidence>
<evidence type="ECO:0000269" key="7">
    <source>
    </source>
</evidence>
<evidence type="ECO:0000269" key="8">
    <source>
    </source>
</evidence>
<evidence type="ECO:0000269" key="9">
    <source>
    </source>
</evidence>
<evidence type="ECO:0000269" key="10">
    <source>
    </source>
</evidence>
<evidence type="ECO:0000269" key="11">
    <source ref="1"/>
</evidence>
<evidence type="ECO:0000303" key="12">
    <source>
    </source>
</evidence>
<evidence type="ECO:0000305" key="13"/>
<evidence type="ECO:0000312" key="14">
    <source>
        <dbReference type="HGNC" id="HGNC:26270"/>
    </source>
</evidence>
<protein>
    <recommendedName>
        <fullName evidence="13">Piezo-type mechanosensitive ion channel component 2</fullName>
    </recommendedName>
    <alternativeName>
        <fullName>Protein FAM38B</fullName>
    </alternativeName>
</protein>
<dbReference type="EMBL" id="JN790819">
    <property type="protein sequence ID" value="AFC88283.1"/>
    <property type="molecule type" value="mRNA"/>
</dbReference>
<dbReference type="EMBL" id="AK026797">
    <property type="protein sequence ID" value="BAB15556.1"/>
    <property type="status" value="ALT_SEQ"/>
    <property type="molecule type" value="mRNA"/>
</dbReference>
<dbReference type="EMBL" id="AK027056">
    <property type="protein sequence ID" value="BAB15641.1"/>
    <property type="status" value="ALT_INIT"/>
    <property type="molecule type" value="mRNA"/>
</dbReference>
<dbReference type="EMBL" id="AK092226">
    <property type="protein sequence ID" value="BAC03832.1"/>
    <property type="status" value="ALT_SEQ"/>
    <property type="molecule type" value="mRNA"/>
</dbReference>
<dbReference type="EMBL" id="AK098782">
    <property type="protein sequence ID" value="BAC05412.1"/>
    <property type="status" value="ALT_SEQ"/>
    <property type="molecule type" value="mRNA"/>
</dbReference>
<dbReference type="EMBL" id="AK127627">
    <property type="protein sequence ID" value="BAC87063.1"/>
    <property type="molecule type" value="mRNA"/>
</dbReference>
<dbReference type="EMBL" id="AK302764">
    <property type="protein sequence ID" value="BAH13798.1"/>
    <property type="molecule type" value="mRNA"/>
</dbReference>
<dbReference type="EMBL" id="AP001180">
    <property type="status" value="NOT_ANNOTATED_CDS"/>
    <property type="molecule type" value="Genomic_DNA"/>
</dbReference>
<dbReference type="EMBL" id="AP005117">
    <property type="status" value="NOT_ANNOTATED_CDS"/>
    <property type="molecule type" value="Genomic_DNA"/>
</dbReference>
<dbReference type="EMBL" id="AP005120">
    <property type="status" value="NOT_ANNOTATED_CDS"/>
    <property type="molecule type" value="Genomic_DNA"/>
</dbReference>
<dbReference type="EMBL" id="AP005404">
    <property type="status" value="NOT_ANNOTATED_CDS"/>
    <property type="molecule type" value="Genomic_DNA"/>
</dbReference>
<dbReference type="EMBL" id="AP005793">
    <property type="status" value="NOT_ANNOTATED_CDS"/>
    <property type="molecule type" value="Genomic_DNA"/>
</dbReference>
<dbReference type="CCDS" id="CCDS11850.2">
    <molecule id="Q9H5I5-1"/>
</dbReference>
<dbReference type="CCDS" id="CCDS92435.1">
    <molecule id="Q9H5I5-4"/>
</dbReference>
<dbReference type="RefSeq" id="NP_001397800.1">
    <molecule id="Q9H5I5-4"/>
    <property type="nucleotide sequence ID" value="NM_001410871.1"/>
</dbReference>
<dbReference type="RefSeq" id="NP_071351.2">
    <molecule id="Q9H5I5-1"/>
    <property type="nucleotide sequence ID" value="NM_022068.4"/>
</dbReference>
<dbReference type="RefSeq" id="XP_011524026.1">
    <property type="nucleotide sequence ID" value="XM_011525724.2"/>
</dbReference>
<dbReference type="SMR" id="Q9H5I5"/>
<dbReference type="BioGRID" id="121975">
    <property type="interactions" value="5"/>
</dbReference>
<dbReference type="FunCoup" id="Q9H5I5">
    <property type="interactions" value="1028"/>
</dbReference>
<dbReference type="STRING" id="9606.ENSP00000421377"/>
<dbReference type="TCDB" id="1.A.75.1.2">
    <property type="family name" value="the mechanical nociceptor, piezo (piezo) family"/>
</dbReference>
<dbReference type="GlyCosmos" id="Q9H5I5">
    <property type="glycosylation" value="3 sites, No reported glycans"/>
</dbReference>
<dbReference type="GlyGen" id="Q9H5I5">
    <property type="glycosylation" value="7 sites, 3 N-linked glycans (3 sites), 1 O-linked glycan (1 site)"/>
</dbReference>
<dbReference type="iPTMnet" id="Q9H5I5"/>
<dbReference type="PhosphoSitePlus" id="Q9H5I5"/>
<dbReference type="SwissPalm" id="Q9H5I5"/>
<dbReference type="BioMuta" id="PIEZO2"/>
<dbReference type="DMDM" id="317373264"/>
<dbReference type="jPOST" id="Q9H5I5"/>
<dbReference type="MassIVE" id="Q9H5I5"/>
<dbReference type="PaxDb" id="9606-ENSP00000421377"/>
<dbReference type="PeptideAtlas" id="Q9H5I5"/>
<dbReference type="ProteomicsDB" id="80910">
    <molecule id="Q9H5I5-1"/>
</dbReference>
<dbReference type="ProteomicsDB" id="80911">
    <molecule id="Q9H5I5-2"/>
</dbReference>
<dbReference type="ProteomicsDB" id="80912">
    <molecule id="Q9H5I5-3"/>
</dbReference>
<dbReference type="ProteomicsDB" id="80913">
    <molecule id="Q9H5I5-4"/>
</dbReference>
<dbReference type="Pumba" id="Q9H5I5"/>
<dbReference type="Antibodypedia" id="2900">
    <property type="antibodies" value="212 antibodies from 20 providers"/>
</dbReference>
<dbReference type="DNASU" id="63895"/>
<dbReference type="Ensembl" id="ENST00000302079.10">
    <molecule id="Q9H5I5-2"/>
    <property type="protein sequence ID" value="ENSP00000303316.6"/>
    <property type="gene ID" value="ENSG00000154864.14"/>
</dbReference>
<dbReference type="Ensembl" id="ENST00000503781.7">
    <molecule id="Q9H5I5-1"/>
    <property type="protein sequence ID" value="ENSP00000421377.3"/>
    <property type="gene ID" value="ENSG00000154864.14"/>
</dbReference>
<dbReference type="Ensembl" id="ENST00000580640.5">
    <molecule id="Q9H5I5-4"/>
    <property type="protein sequence ID" value="ENSP00000463094.1"/>
    <property type="gene ID" value="ENSG00000154864.14"/>
</dbReference>
<dbReference type="GeneID" id="63895"/>
<dbReference type="KEGG" id="hsa:63895"/>
<dbReference type="UCSC" id="uc002koq.4">
    <molecule id="Q9H5I5-1"/>
    <property type="organism name" value="human"/>
</dbReference>
<dbReference type="AGR" id="HGNC:26270"/>
<dbReference type="CTD" id="63895"/>
<dbReference type="DisGeNET" id="63895"/>
<dbReference type="GeneCards" id="PIEZO2"/>
<dbReference type="HGNC" id="HGNC:26270">
    <property type="gene designation" value="PIEZO2"/>
</dbReference>
<dbReference type="HPA" id="ENSG00000154864">
    <property type="expression patterns" value="Tissue enhanced (brain)"/>
</dbReference>
<dbReference type="MalaCards" id="PIEZO2"/>
<dbReference type="MIM" id="108145">
    <property type="type" value="phenotype"/>
</dbReference>
<dbReference type="MIM" id="114300">
    <property type="type" value="phenotype"/>
</dbReference>
<dbReference type="MIM" id="248700">
    <property type="type" value="phenotype"/>
</dbReference>
<dbReference type="MIM" id="613629">
    <property type="type" value="gene"/>
</dbReference>
<dbReference type="MIM" id="617146">
    <property type="type" value="phenotype"/>
</dbReference>
<dbReference type="neXtProt" id="NX_Q9H5I5"/>
<dbReference type="OpenTargets" id="ENSG00000154864"/>
<dbReference type="Orphanet" id="1154">
    <property type="disease" value="Arthrogryposis-oculomotor limitation-electroretinal anomalies syndrome"/>
</dbReference>
<dbReference type="Orphanet" id="376">
    <property type="disease" value="Gordon syndrome"/>
</dbReference>
<dbReference type="Orphanet" id="2461">
    <property type="disease" value="Marden-Walker syndrome"/>
</dbReference>
<dbReference type="PharmGKB" id="PA134930761"/>
<dbReference type="VEuPathDB" id="HostDB:ENSG00000154864"/>
<dbReference type="eggNOG" id="KOG1893">
    <property type="taxonomic scope" value="Eukaryota"/>
</dbReference>
<dbReference type="GeneTree" id="ENSGT00940000154456"/>
<dbReference type="HOGENOM" id="CLU_031849_0_0_1"/>
<dbReference type="InParanoid" id="Q9H5I5"/>
<dbReference type="OrthoDB" id="303066at2759"/>
<dbReference type="PAN-GO" id="Q9H5I5">
    <property type="GO annotations" value="6 GO annotations based on evolutionary models"/>
</dbReference>
<dbReference type="PhylomeDB" id="Q9H5I5"/>
<dbReference type="TreeFam" id="TF314295"/>
<dbReference type="PathwayCommons" id="Q9H5I5"/>
<dbReference type="SignaLink" id="Q9H5I5"/>
<dbReference type="SIGNOR" id="Q9H5I5"/>
<dbReference type="BioGRID-ORCS" id="63895">
    <property type="hits" value="6 hits in 308 CRISPR screens"/>
</dbReference>
<dbReference type="ChiTaRS" id="PIEZO2">
    <property type="organism name" value="human"/>
</dbReference>
<dbReference type="GenomeRNAi" id="63895"/>
<dbReference type="Pharos" id="Q9H5I5">
    <property type="development level" value="Tbio"/>
</dbReference>
<dbReference type="PRO" id="PR:Q9H5I5"/>
<dbReference type="Proteomes" id="UP000005640">
    <property type="component" value="Chromosome 18"/>
</dbReference>
<dbReference type="RNAct" id="Q9H5I5">
    <property type="molecule type" value="protein"/>
</dbReference>
<dbReference type="Bgee" id="ENSG00000154864">
    <property type="expression patterns" value="Expressed in sural nerve and 169 other cell types or tissues"/>
</dbReference>
<dbReference type="ExpressionAtlas" id="Q9H5I5">
    <property type="expression patterns" value="baseline and differential"/>
</dbReference>
<dbReference type="GO" id="GO:0032437">
    <property type="term" value="C:cuticular plate"/>
    <property type="evidence" value="ECO:0000250"/>
    <property type="project" value="UniProtKB"/>
</dbReference>
<dbReference type="GO" id="GO:0032809">
    <property type="term" value="C:neuronal cell body membrane"/>
    <property type="evidence" value="ECO:0000250"/>
    <property type="project" value="UniProtKB"/>
</dbReference>
<dbReference type="GO" id="GO:0005886">
    <property type="term" value="C:plasma membrane"/>
    <property type="evidence" value="ECO:0000318"/>
    <property type="project" value="GO_Central"/>
</dbReference>
<dbReference type="GO" id="GO:0032420">
    <property type="term" value="C:stereocilium"/>
    <property type="evidence" value="ECO:0000250"/>
    <property type="project" value="UniProtKB"/>
</dbReference>
<dbReference type="GO" id="GO:0140135">
    <property type="term" value="F:mechanosensitive monoatomic cation channel activity"/>
    <property type="evidence" value="ECO:0000250"/>
    <property type="project" value="UniProt"/>
</dbReference>
<dbReference type="GO" id="GO:0008381">
    <property type="term" value="F:mechanosensitive monoatomic ion channel activity"/>
    <property type="evidence" value="ECO:0000250"/>
    <property type="project" value="UniProtKB"/>
</dbReference>
<dbReference type="GO" id="GO:0005261">
    <property type="term" value="F:monoatomic cation channel activity"/>
    <property type="evidence" value="ECO:0000318"/>
    <property type="project" value="GO_Central"/>
</dbReference>
<dbReference type="GO" id="GO:0071260">
    <property type="term" value="P:cellular response to mechanical stimulus"/>
    <property type="evidence" value="ECO:0000318"/>
    <property type="project" value="GO_Central"/>
</dbReference>
<dbReference type="GO" id="GO:0050982">
    <property type="term" value="P:detection of mechanical stimulus"/>
    <property type="evidence" value="ECO:0000318"/>
    <property type="project" value="GO_Central"/>
</dbReference>
<dbReference type="GO" id="GO:0050974">
    <property type="term" value="P:detection of mechanical stimulus involved in sensory perception"/>
    <property type="evidence" value="ECO:0000250"/>
    <property type="project" value="UniProtKB"/>
</dbReference>
<dbReference type="GO" id="GO:0006812">
    <property type="term" value="P:monoatomic cation transport"/>
    <property type="evidence" value="ECO:0000250"/>
    <property type="project" value="UniProtKB"/>
</dbReference>
<dbReference type="GO" id="GO:0042391">
    <property type="term" value="P:regulation of membrane potential"/>
    <property type="evidence" value="ECO:0000318"/>
    <property type="project" value="GO_Central"/>
</dbReference>
<dbReference type="GO" id="GO:0009612">
    <property type="term" value="P:response to mechanical stimulus"/>
    <property type="evidence" value="ECO:0000250"/>
    <property type="project" value="UniProtKB"/>
</dbReference>
<dbReference type="InterPro" id="IPR027272">
    <property type="entry name" value="Piezo"/>
</dbReference>
<dbReference type="InterPro" id="IPR031334">
    <property type="entry name" value="Piezo_cap_dom"/>
</dbReference>
<dbReference type="InterPro" id="IPR056770">
    <property type="entry name" value="Piezo_THU9_anchor"/>
</dbReference>
<dbReference type="InterPro" id="IPR056769">
    <property type="entry name" value="Piezo_TM1-24"/>
</dbReference>
<dbReference type="InterPro" id="IPR031805">
    <property type="entry name" value="Piezo_TM25-28"/>
</dbReference>
<dbReference type="InterPro" id="IPR056768">
    <property type="entry name" value="THU_Piezo"/>
</dbReference>
<dbReference type="PANTHER" id="PTHR47049:SF6">
    <property type="entry name" value="PIEZO-TYPE MECHANOSENSITIVE ION CHANNEL COMPONENT"/>
    <property type="match status" value="1"/>
</dbReference>
<dbReference type="PANTHER" id="PTHR47049">
    <property type="entry name" value="PIEZO-TYPE MECHANOSENSITIVE ION CHANNEL HOMOLOG"/>
    <property type="match status" value="1"/>
</dbReference>
<dbReference type="Pfam" id="PF12166">
    <property type="entry name" value="Piezo_cap"/>
    <property type="match status" value="1"/>
</dbReference>
<dbReference type="Pfam" id="PF24874">
    <property type="entry name" value="Piezo_THU9_anchor"/>
    <property type="match status" value="1"/>
</dbReference>
<dbReference type="Pfam" id="PF24871">
    <property type="entry name" value="Piezo_TM1-24"/>
    <property type="match status" value="2"/>
</dbReference>
<dbReference type="Pfam" id="PF15917">
    <property type="entry name" value="Piezo_TM25-28"/>
    <property type="match status" value="1"/>
</dbReference>
<dbReference type="Pfam" id="PF23188">
    <property type="entry name" value="THU_Piezo1"/>
    <property type="match status" value="1"/>
</dbReference>
<proteinExistence type="evidence at protein level"/>
<name>PIEZ2_HUMAN</name>
<accession>Q9H5I5</accession>
<accession>B7Z812</accession>
<accession>M4GPJ9</accession>
<accession>Q6ZS91</accession>
<accession>Q8N787</accession>
<accession>Q8NAR6</accession>
<accession>Q9H5R4</accession>
<feature type="chain" id="PRO_0000186818" description="Piezo-type mechanosensitive ion channel component 2">
    <location>
        <begin position="1"/>
        <end position="2752"/>
    </location>
</feature>
<feature type="topological domain" description="Cytoplasmic" evidence="1">
    <location>
        <begin position="1"/>
        <end position="12"/>
    </location>
</feature>
<feature type="transmembrane region" description="Helical; Name=1" evidence="1">
    <location>
        <begin position="13"/>
        <end position="24"/>
    </location>
</feature>
<feature type="topological domain" description="Extracellular" evidence="1">
    <location>
        <begin position="25"/>
        <end position="30"/>
    </location>
</feature>
<feature type="transmembrane region" description="Helical; Name=2" evidence="1">
    <location>
        <begin position="31"/>
        <end position="43"/>
    </location>
</feature>
<feature type="topological domain" description="Cytoplasmic" evidence="1">
    <location>
        <begin position="44"/>
        <end position="50"/>
    </location>
</feature>
<feature type="transmembrane region" description="Helical; Name=3" evidence="1">
    <location>
        <begin position="51"/>
        <end position="76"/>
    </location>
</feature>
<feature type="topological domain" description="Extracellular" evidence="1">
    <location>
        <begin position="77"/>
        <end position="122"/>
    </location>
</feature>
<feature type="transmembrane region" description="Helical; Name=4" evidence="1">
    <location>
        <begin position="123"/>
        <end position="141"/>
    </location>
</feature>
<feature type="topological domain" description="Cytoplasmic" evidence="1">
    <location>
        <begin position="142"/>
        <end position="221"/>
    </location>
</feature>
<feature type="transmembrane region" description="Helical; Name=5" evidence="1">
    <location>
        <begin position="222"/>
        <end position="237"/>
    </location>
</feature>
<feature type="topological domain" description="Extracellular" evidence="1">
    <location>
        <begin position="238"/>
        <end position="240"/>
    </location>
</feature>
<feature type="transmembrane region" description="Helical; Name=6" evidence="1">
    <location>
        <begin position="241"/>
        <end position="258"/>
    </location>
</feature>
<feature type="topological domain" description="Cytoplasmic" evidence="1">
    <location>
        <begin position="259"/>
        <end position="264"/>
    </location>
</feature>
<feature type="transmembrane region" description="Helical; Name=7" evidence="1">
    <location>
        <begin position="265"/>
        <end position="287"/>
    </location>
</feature>
<feature type="topological domain" description="Extracellular" evidence="1">
    <location>
        <begin position="288"/>
        <end position="335"/>
    </location>
</feature>
<feature type="transmembrane region" description="Helical; Name=8" evidence="1">
    <location>
        <begin position="336"/>
        <end position="355"/>
    </location>
</feature>
<feature type="topological domain" description="Cytoplasmic" evidence="1">
    <location>
        <begin position="356"/>
        <end position="492"/>
    </location>
</feature>
<feature type="transmembrane region" description="Helical; Name=9" evidence="1">
    <location>
        <begin position="493"/>
        <end position="514"/>
    </location>
</feature>
<feature type="topological domain" description="Extracellular" evidence="1">
    <location>
        <begin position="515"/>
        <end position="519"/>
    </location>
</feature>
<feature type="transmembrane region" description="Helical; Name=10" evidence="1">
    <location>
        <begin position="520"/>
        <end position="531"/>
    </location>
</feature>
<feature type="topological domain" description="Cytoplasmic" evidence="1">
    <location>
        <begin position="532"/>
        <end position="535"/>
    </location>
</feature>
<feature type="transmembrane region" description="Helical; Name=11" evidence="1">
    <location>
        <begin position="536"/>
        <end position="562"/>
    </location>
</feature>
<feature type="topological domain" description="Extracellular" evidence="1">
    <location>
        <begin position="563"/>
        <end position="583"/>
    </location>
</feature>
<feature type="transmembrane region" description="Helical; Name=12" evidence="1">
    <location>
        <begin position="584"/>
        <end position="614"/>
    </location>
</feature>
<feature type="topological domain" description="Cytoplasmic" evidence="1">
    <location>
        <begin position="615"/>
        <end position="685"/>
    </location>
</feature>
<feature type="transmembrane region" description="Helical; Name=13" evidence="1">
    <location>
        <begin position="686"/>
        <end position="699"/>
    </location>
</feature>
<feature type="topological domain" description="Extracellular" evidence="1">
    <location>
        <begin position="700"/>
        <end position="705"/>
    </location>
</feature>
<feature type="transmembrane region" description="Helical; Name=14" evidence="1">
    <location>
        <begin position="706"/>
        <end position="724"/>
    </location>
</feature>
<feature type="topological domain" description="Cytoplasmic" evidence="1">
    <location>
        <begin position="725"/>
        <end position="733"/>
    </location>
</feature>
<feature type="transmembrane region" description="Helical; Name=15" evidence="1">
    <location>
        <begin position="734"/>
        <end position="753"/>
    </location>
</feature>
<feature type="topological domain" description="Extracellular" evidence="1">
    <location>
        <begin position="754"/>
        <end position="785"/>
    </location>
</feature>
<feature type="transmembrane region" description="Helical; Name=16" evidence="1">
    <location>
        <begin position="786"/>
        <end position="807"/>
    </location>
</feature>
<feature type="topological domain" description="Cytoplasmic" evidence="1">
    <location>
        <begin position="808"/>
        <end position="940"/>
    </location>
</feature>
<feature type="transmembrane region" description="Helical; Name=17" evidence="1">
    <location>
        <begin position="941"/>
        <end position="956"/>
    </location>
</feature>
<feature type="topological domain" description="Extracellular" evidence="1">
    <location>
        <begin position="957"/>
        <end position="962"/>
    </location>
</feature>
<feature type="transmembrane region" description="Helical; Name=18" evidence="1">
    <location>
        <begin position="963"/>
        <end position="972"/>
    </location>
</feature>
<feature type="topological domain" description="Cytoplasmic" evidence="1">
    <location>
        <begin position="973"/>
        <end position="980"/>
    </location>
</feature>
<feature type="transmembrane region" description="Helical; Name=19" evidence="1">
    <location>
        <begin position="981"/>
        <end position="1001"/>
    </location>
</feature>
<feature type="topological domain" description="Extracellular" evidence="1">
    <location>
        <begin position="1002"/>
        <end position="1057"/>
    </location>
</feature>
<feature type="transmembrane region" description="Helical; Name=20" evidence="1">
    <location>
        <begin position="1058"/>
        <end position="1082"/>
    </location>
</feature>
<feature type="topological domain" description="Cytoplasmic" evidence="1">
    <location>
        <begin position="1083"/>
        <end position="1123"/>
    </location>
</feature>
<feature type="transmembrane region" description="Helical; Name=21" evidence="1">
    <location>
        <begin position="1124"/>
        <end position="1138"/>
    </location>
</feature>
<feature type="topological domain" description="Extracellular" evidence="1">
    <location>
        <begin position="1139"/>
        <end position="1140"/>
    </location>
</feature>
<feature type="transmembrane region" description="Helical; Name=22" evidence="1">
    <location>
        <begin position="1141"/>
        <end position="1154"/>
    </location>
</feature>
<feature type="topological domain" description="Cytoplasmic" evidence="1">
    <location>
        <begin position="1155"/>
        <end position="1165"/>
    </location>
</feature>
<feature type="transmembrane region" description="Helical; Name=23" evidence="1">
    <location>
        <begin position="1166"/>
        <end position="1185"/>
    </location>
</feature>
<feature type="topological domain" description="Extracellular" evidence="1">
    <location>
        <begin position="1186"/>
        <end position="1222"/>
    </location>
</feature>
<feature type="transmembrane region" description="Helical; Name=24" evidence="1">
    <location>
        <begin position="1223"/>
        <end position="1243"/>
    </location>
</feature>
<feature type="topological domain" description="Cytoplasmic" evidence="1">
    <location>
        <begin position="1244"/>
        <end position="1297"/>
    </location>
</feature>
<feature type="transmembrane region" description="Helical; Name=25" evidence="1">
    <location>
        <begin position="1298"/>
        <end position="1310"/>
    </location>
</feature>
<feature type="topological domain" description="Extracellular" evidence="1">
    <location>
        <begin position="1311"/>
        <end position="1316"/>
    </location>
</feature>
<feature type="transmembrane region" description="Helical; Name=26" evidence="1">
    <location>
        <begin position="1317"/>
        <end position="1329"/>
    </location>
</feature>
<feature type="topological domain" description="Cytoplasmic" evidence="1">
    <location>
        <begin position="1330"/>
        <end position="1338"/>
    </location>
</feature>
<feature type="transmembrane region" description="Helical; Name=27" evidence="1">
    <location>
        <begin position="1339"/>
        <end position="1364"/>
    </location>
</feature>
<feature type="topological domain" description="Extracellular" evidence="1">
    <location>
        <begin position="1365"/>
        <end position="1413"/>
    </location>
</feature>
<feature type="transmembrane region" description="Helical; Name=28" evidence="1">
    <location>
        <begin position="1414"/>
        <end position="1430"/>
    </location>
</feature>
<feature type="topological domain" description="Cytoplasmic" evidence="1">
    <location>
        <begin position="1431"/>
        <end position="1921"/>
    </location>
</feature>
<feature type="transmembrane region" description="Helical; Name=29" evidence="1">
    <location>
        <begin position="1922"/>
        <end position="1936"/>
    </location>
</feature>
<feature type="topological domain" description="Extracellular" evidence="1">
    <location>
        <begin position="1937"/>
        <end position="1943"/>
    </location>
</feature>
<feature type="transmembrane region" description="Helical; Name=30" evidence="1">
    <location>
        <begin position="1944"/>
        <end position="1955"/>
    </location>
</feature>
<feature type="topological domain" description="Cytoplasmic" evidence="1">
    <location>
        <begin position="1956"/>
        <end position="1961"/>
    </location>
</feature>
<feature type="transmembrane region" description="Helical; Name=31" evidence="1">
    <location>
        <begin position="1962"/>
        <end position="1983"/>
    </location>
</feature>
<feature type="topological domain" description="Extracellular" evidence="1">
    <location>
        <begin position="1984"/>
        <end position="2016"/>
    </location>
</feature>
<feature type="transmembrane region" description="Helical; Name=32" evidence="1">
    <location>
        <begin position="2017"/>
        <end position="2035"/>
    </location>
</feature>
<feature type="topological domain" description="Cytoplasmic" evidence="1">
    <location>
        <begin position="2036"/>
        <end position="2189"/>
    </location>
</feature>
<feature type="transmembrane region" description="Helical; Name=33" evidence="1">
    <location>
        <begin position="2190"/>
        <end position="2209"/>
    </location>
</feature>
<feature type="topological domain" description="Extracellular" evidence="1">
    <location>
        <begin position="2210"/>
        <end position="2231"/>
    </location>
</feature>
<feature type="transmembrane region" description="Helical; Name=34" evidence="1">
    <location>
        <begin position="2232"/>
        <end position="2252"/>
    </location>
</feature>
<feature type="topological domain" description="Cytoplasmic" evidence="1">
    <location>
        <begin position="2253"/>
        <end position="2256"/>
    </location>
</feature>
<feature type="transmembrane region" description="Helical; Name=35" evidence="1">
    <location>
        <begin position="2257"/>
        <end position="2280"/>
    </location>
</feature>
<feature type="topological domain" description="Extracellular" evidence="1">
    <location>
        <begin position="2281"/>
        <end position="2289"/>
    </location>
</feature>
<feature type="transmembrane region" description="Helical; Name=36" evidence="1">
    <location>
        <begin position="2290"/>
        <end position="2312"/>
    </location>
</feature>
<feature type="topological domain" description="Cytoplasmic" evidence="1">
    <location>
        <begin position="2313"/>
        <end position="2397"/>
    </location>
</feature>
<feature type="transmembrane region" description="Helical; Name=37" evidence="1">
    <location>
        <begin position="2398"/>
        <end position="2421"/>
    </location>
</feature>
<feature type="topological domain" description="Extracellular" evidence="1">
    <location>
        <begin position="2422"/>
        <end position="2669"/>
    </location>
</feature>
<feature type="transmembrane region" description="Helical; Name=38" evidence="1">
    <location>
        <begin position="2670"/>
        <end position="2690"/>
    </location>
</feature>
<feature type="topological domain" description="Cytoplasmic" evidence="1">
    <location>
        <begin position="2691"/>
        <end position="2752"/>
    </location>
</feature>
<feature type="region of interest" description="Disordered" evidence="3">
    <location>
        <begin position="446"/>
        <end position="478"/>
    </location>
</feature>
<feature type="region of interest" description="Disordered" evidence="3">
    <location>
        <begin position="623"/>
        <end position="664"/>
    </location>
</feature>
<feature type="region of interest" description="Disordered" evidence="3">
    <location>
        <begin position="862"/>
        <end position="902"/>
    </location>
</feature>
<feature type="region of interest" description="Disordered" evidence="3">
    <location>
        <begin position="1488"/>
        <end position="1534"/>
    </location>
</feature>
<feature type="region of interest" description="Disordered" evidence="3">
    <location>
        <begin position="1593"/>
        <end position="1636"/>
    </location>
</feature>
<feature type="region of interest" description="Disordered" evidence="3">
    <location>
        <begin position="1844"/>
        <end position="1868"/>
    </location>
</feature>
<feature type="region of interest" description="Disordered" evidence="3">
    <location>
        <begin position="2047"/>
        <end position="2069"/>
    </location>
</feature>
<feature type="region of interest" description="Disordered" evidence="3">
    <location>
        <begin position="2090"/>
        <end position="2135"/>
    </location>
</feature>
<feature type="coiled-coil region" evidence="2">
    <location>
        <begin position="1458"/>
        <end position="1529"/>
    </location>
</feature>
<feature type="compositionally biased region" description="Acidic residues" evidence="3">
    <location>
        <begin position="463"/>
        <end position="474"/>
    </location>
</feature>
<feature type="compositionally biased region" description="Acidic residues" evidence="3">
    <location>
        <begin position="623"/>
        <end position="632"/>
    </location>
</feature>
<feature type="compositionally biased region" description="Basic and acidic residues" evidence="3">
    <location>
        <begin position="649"/>
        <end position="660"/>
    </location>
</feature>
<feature type="compositionally biased region" description="Basic and acidic residues" evidence="3">
    <location>
        <begin position="862"/>
        <end position="883"/>
    </location>
</feature>
<feature type="compositionally biased region" description="Acidic residues" evidence="3">
    <location>
        <begin position="884"/>
        <end position="902"/>
    </location>
</feature>
<feature type="compositionally biased region" description="Basic residues" evidence="3">
    <location>
        <begin position="1594"/>
        <end position="1615"/>
    </location>
</feature>
<feature type="compositionally biased region" description="Low complexity" evidence="3">
    <location>
        <begin position="2100"/>
        <end position="2127"/>
    </location>
</feature>
<feature type="modified residue" description="Phosphoserine" evidence="1">
    <location>
        <position position="838"/>
    </location>
</feature>
<feature type="glycosylation site" description="N-linked (GlcNAc...) asparagine" evidence="2">
    <location>
        <position position="95"/>
    </location>
</feature>
<feature type="glycosylation site" description="N-linked (GlcNAc...) asparagine" evidence="2">
    <location>
        <position position="1013"/>
    </location>
</feature>
<feature type="disulfide bond" evidence="1">
    <location>
        <begin position="1014"/>
        <end position="1192"/>
    </location>
</feature>
<feature type="splice variant" id="VSP_040471" description="In isoform 3." evidence="12">
    <location>
        <begin position="1"/>
        <end position="2043"/>
    </location>
</feature>
<feature type="splice variant" id="VSP_040630" description="In isoform 4." evidence="12">
    <original>R</original>
    <variation>SHAKVNGRVYLIINSIKKKLPIHQNE</variation>
    <location>
        <position position="831"/>
    </location>
</feature>
<feature type="splice variant" id="VSP_040472" description="In isoform 2." evidence="12">
    <location>
        <begin position="2387"/>
        <end position="2449"/>
    </location>
</feature>
<feature type="sequence variant" id="VAR_071817" description="In DA5; dbSNP:rs587777453." evidence="6">
    <original>M</original>
    <variation>V</variation>
    <location>
        <position position="712"/>
    </location>
</feature>
<feature type="sequence variant" id="VAR_070938" description="In DA5; recovers faster from inactivation; dbSNP:rs587777076." evidence="5">
    <original>I</original>
    <variation>F</variation>
    <location>
        <position position="802"/>
    </location>
</feature>
<feature type="sequence variant" id="VAR_071039" description="In dbSNP:rs7234309." evidence="4 11">
    <original>V</original>
    <variation>I</variation>
    <location>
        <position position="1354"/>
    </location>
</feature>
<feature type="sequence variant" id="VAR_077843" description="In DAIPT; dbSNP:rs886039823." evidence="8">
    <original>R</original>
    <variation>P</variation>
    <location>
        <position position="1685"/>
    </location>
</feature>
<feature type="sequence variant" id="VAR_033925" description="In dbSNP:rs3748428." evidence="11">
    <original>V</original>
    <variation>I</variation>
    <location>
        <position position="2463"/>
    </location>
</feature>
<feature type="sequence variant" id="VAR_071302" description="In MWKS; dbSNP:rs587777451." evidence="6">
    <original>R</original>
    <variation>C</variation>
    <location>
        <position position="2686"/>
    </location>
</feature>
<feature type="sequence variant" id="VAR_071303" description="In DA3; dbSNP:rs587777450." evidence="6">
    <original>R</original>
    <variation>H</variation>
    <location>
        <position position="2686"/>
    </location>
</feature>
<feature type="sequence variant" id="VAR_071304" description="In DA5; dbSNP:rs587777452." evidence="6">
    <original>R</original>
    <variation>L</variation>
    <location>
        <position position="2718"/>
    </location>
</feature>
<feature type="sequence variant" id="VAR_071305" description="In DA5; dbSNP:rs587777452." evidence="6">
    <original>R</original>
    <variation>P</variation>
    <location>
        <position position="2718"/>
    </location>
</feature>
<feature type="sequence variant" id="VAR_071818" description="In DA5; causes slowing of inactivation of PIEZO2-dependent mechanically activated currents as well as significantly faster recovery from inactivation compared to wild-type." evidence="5">
    <location>
        <position position="2727"/>
    </location>
</feature>
<feature type="sequence variant" id="VAR_071306" description="In DA5; dbSNP:rs587777454." evidence="6">
    <original>S</original>
    <variation>P</variation>
    <location>
        <position position="2739"/>
    </location>
</feature>
<feature type="sequence conflict" description="In Ref. 2; BAC03832." evidence="13" ref="2">
    <original>S</original>
    <variation>F</variation>
    <location>
        <position position="455"/>
    </location>
</feature>
<feature type="sequence conflict" description="In Ref. 2; BAC05412." evidence="13" ref="2">
    <original>N</original>
    <variation>D</variation>
    <location>
        <position position="758"/>
    </location>
</feature>
<feature type="sequence conflict" description="In Ref. 2; BAC87063." evidence="13" ref="2">
    <original>R</original>
    <variation>C</variation>
    <location>
        <position position="980"/>
    </location>
</feature>
<feature type="sequence conflict" description="In Ref. 2; BAC05412." evidence="13" ref="2">
    <original>L</original>
    <variation>S</variation>
    <location>
        <position position="999"/>
    </location>
</feature>
<feature type="sequence conflict" description="In Ref. 2; BAC87063." evidence="13" ref="2">
    <original>C</original>
    <variation>G</variation>
    <location>
        <position position="1175"/>
    </location>
</feature>
<keyword id="KW-0025">Alternative splicing</keyword>
<keyword id="KW-1003">Cell membrane</keyword>
<keyword id="KW-0175">Coiled coil</keyword>
<keyword id="KW-0225">Disease variant</keyword>
<keyword id="KW-1015">Disulfide bond</keyword>
<keyword id="KW-0325">Glycoprotein</keyword>
<keyword id="KW-0407">Ion channel</keyword>
<keyword id="KW-0406">Ion transport</keyword>
<keyword id="KW-0472">Membrane</keyword>
<keyword id="KW-0597">Phosphoprotein</keyword>
<keyword id="KW-1267">Proteomics identification</keyword>
<keyword id="KW-1185">Reference proteome</keyword>
<keyword id="KW-0716">Sensory transduction</keyword>
<keyword id="KW-0812">Transmembrane</keyword>
<keyword id="KW-1133">Transmembrane helix</keyword>
<keyword id="KW-0813">Transport</keyword>
<comment type="function">
    <text evidence="1 9 10">Pore-forming subunit of the mechanosensitive non-specific cation Piezo channel required for rapidly adapting mechanically activated (MA) currents and has a key role in sensing touch and tactile pain (PubMed:37590348). Piezo channels are homotrimeric three-blade propeller-shaped structures that utilize a cap-motion and plug-and-latch mechanism to gate their ion-conducting pathways (PubMed:37590348). Expressed in sensory neurons, is essential for diverse physiological processes, including respiratory control, systemic metabolism, urinary function, and proprioception (By similarity). Mediates airway stretch sensing, enabling efficient respiration at birth and maintaining normal breathing in adults (By similarity). It regulates brown and beige adipose tissue morphology and function, preventing systemic hypermetabolism (By similarity). In the lower urinary tract, acts as a sensor in both the bladder urothelium and innervating sensory neurons being required for bladder-stretch sensing and urethral micturition reflexes, ensuring proper urinary function (PubMed:33057202). Additionally, PIEZO2 serves as the principal mechanotransducer in proprioceptors, facilitating proprioception and coordinated body movements (By similarity). In inner ear hair cells, PIEZO1/2 subunits may constitute part of the mechanotransducer (MET) non-selective cation channel complex where they may act as pore-forming ion-conducting component in the complex (By similarity). Required for Merkel-cell mechanotransduction (By similarity). Plays a major role in light-touch mechanosensation (By similarity).</text>
</comment>
<comment type="catalytic activity">
    <reaction evidence="1">
        <text>Ca(2+)(in) = Ca(2+)(out)</text>
        <dbReference type="Rhea" id="RHEA:29671"/>
        <dbReference type="ChEBI" id="CHEBI:29108"/>
    </reaction>
</comment>
<comment type="activity regulation">
    <text evidence="1 10">Regulated by auxillary subunits MDFIC and MDFI (PubMed:37590348). Channel activity is inhibited by TMEM120A (By similarity). Phosphatidic acid and lysophosphatidic acid inhibit PIEZO2 channel activity (By similarity).</text>
</comment>
<comment type="subunit">
    <text evidence="1 10">Homotrimer; the homotrimer forms a propeller-shaped Piezo channel with a cation-ion conducting pore (PubMed:37590348). Heterotrimeric interaction may occur between PIEZO1 and PIEZO2 (By similarity). Interacts with STOML3 (By similarity). Interacts with TMC7; the interaction inhibits PIEZO2-conducted mechanically activated currents (By similarity). Interacts with TMC1; the interaction may be part of the MET complex (By similarity). Interacts with MDFIC (via C-terminus); the interaction prolongs Piezo channel inactivation (PubMed:37590348). Interacts with MDFI (via C-terminus); the interaction prolongs Piezo channel inactivation (PubMed:37590348).</text>
</comment>
<comment type="subcellular location">
    <subcellularLocation>
        <location evidence="1">Cell membrane</location>
        <topology evidence="1">Multi-pass membrane protein</topology>
    </subcellularLocation>
</comment>
<comment type="alternative products">
    <event type="alternative splicing"/>
    <isoform>
        <id>Q9H5I5-1</id>
        <name>1</name>
        <sequence type="displayed"/>
    </isoform>
    <isoform>
        <id>Q9H5I5-2</id>
        <name>2</name>
        <sequence type="described" ref="VSP_040472"/>
    </isoform>
    <isoform>
        <id>Q9H5I5-3</id>
        <name>3</name>
        <sequence type="described" ref="VSP_040471"/>
    </isoform>
    <isoform>
        <id>Q9H5I5-4</id>
        <name>4</name>
        <sequence type="described" ref="VSP_040630"/>
    </isoform>
</comment>
<comment type="disease" evidence="5 6">
    <disease id="DI-04009">
        <name>Arthrogryposis, distal, 5</name>
        <acronym>DA5</acronym>
        <description>A form of distal arthrogryposis, a disease characterized by congenital joint contractures that mainly involve two or more distal parts of the limbs, in the absence of a primary neurological or muscle disease. DA5 features include ocular abnormalities, typically ptosis, ophthalmoplegia and/or strabismus, in addition to contractures of the skeletal muscles. Some patients have pulmonary hypertension as a result of restrictive lung disease.</description>
        <dbReference type="MIM" id="108145"/>
    </disease>
    <text>The disease is caused by variants affecting the gene represented in this entry.</text>
</comment>
<comment type="disease" evidence="6">
    <disease id="DI-04138">
        <name>Arthrogryposis, distal, 3</name>
        <acronym>DA3</acronym>
        <description>A form of distal arthrogryposis, a disease characterized by congenital joint contractures that mainly involve two or more distal parts of the limbs, in the absence of a primary neurological or muscle disease. DA3 features include short stature and cleft palate.</description>
        <dbReference type="MIM" id="114300"/>
    </disease>
    <text>The disease is caused by variants affecting the gene represented in this entry.</text>
</comment>
<comment type="disease" evidence="6">
    <disease id="DI-04140">
        <name>Marden-Walker syndrome</name>
        <acronym>MWKS</acronym>
        <description>A syndrome characterized by a mask-like face with blepharophimosis, micrognathia, cleft or high-arched palate, low-set ears, congenital joint contractures, kyphoscoliosis, pectus excavatum or carinatum, and arachnodactyly. Additional features include decreased muscular mass, failure to thrive, renal anomalies, hypoplastic corpus callosum, cerebellar vermis hypoplasia, enlarged cisterna magna, and psychomotor retardation.</description>
        <dbReference type="MIM" id="248700"/>
    </disease>
    <text>The disease is caused by variants affecting the gene represented in this entry.</text>
</comment>
<comment type="disease" evidence="7 8">
    <disease id="DI-04863">
        <name>Arthrogryposis, distal, with impaired proprioception and touch</name>
        <acronym>DAIPT</acronym>
        <description>A form of distal arthrogryposis, a disease characterized by congenital joint contractures that mainly involve two or more distal parts of the limbs, in the absence of a primary neurological or muscle disease. DAIPT is an autosomal recessive disease characterized by selective loss of discriminative touch perception, ataxia, difficulty walking, dysmetria, and progressive skeletal contractures.</description>
        <dbReference type="MIM" id="617146"/>
    </disease>
    <text>The disease is caused by variants affecting the gene represented in this entry.</text>
</comment>
<comment type="miscellaneous">
    <text>Piezo comes from the Greek 'piesi' meaning pressure.</text>
</comment>
<comment type="similarity">
    <text evidence="13">Belongs to the PIEZO (TC 1.A.75) family.</text>
</comment>
<comment type="sequence caution" evidence="13">
    <conflict type="erroneous initiation">
        <sequence resource="EMBL-CDS" id="BAB15556"/>
    </conflict>
    <text>Truncated N-terminus.</text>
</comment>
<comment type="sequence caution" evidence="13">
    <conflict type="erroneous termination">
        <sequence resource="EMBL-CDS" id="BAB15556"/>
    </conflict>
    <text>Truncated C-terminus.</text>
</comment>
<comment type="sequence caution" evidence="13">
    <conflict type="erroneous initiation">
        <sequence resource="EMBL-CDS" id="BAB15641"/>
    </conflict>
    <text>Truncated N-terminus.</text>
</comment>
<comment type="sequence caution" evidence="13">
    <conflict type="miscellaneous discrepancy">
        <sequence resource="EMBL-CDS" id="BAC03832"/>
    </conflict>
    <text>Unlikely isoform. Aberrant splice sites.</text>
</comment>
<comment type="sequence caution" evidence="13">
    <conflict type="erroneous initiation">
        <sequence resource="EMBL-CDS" id="BAC05412"/>
    </conflict>
    <text>Truncated N-terminus.</text>
</comment>
<comment type="sequence caution" evidence="13">
    <conflict type="miscellaneous discrepancy">
        <sequence resource="EMBL-CDS" id="BAC05412"/>
    </conflict>
    <text>Contaminating sequence at the 3'end. Probable cloning artifact.</text>
</comment>
<reference key="1">
    <citation type="submission" date="2011-09" db="EMBL/GenBank/DDBJ databases">
        <title>A role for Fam38b in mechanical hypersensitivity.</title>
        <authorList>
            <person name="Eijkelkamp N."/>
            <person name="Cox J."/>
            <person name="Torres J.M."/>
            <person name="Sang H.G."/>
            <person name="Wood J.N."/>
        </authorList>
    </citation>
    <scope>NUCLEOTIDE SEQUENCE [MRNA] (ISOFORM 1)</scope>
    <scope>VARIANTS ILE-1354 AND ILE-2463</scope>
    <source>
        <tissue>Spinal ganglion</tissue>
    </source>
</reference>
<reference key="2">
    <citation type="journal article" date="2004" name="Nat. Genet.">
        <title>Complete sequencing and characterization of 21,243 full-length human cDNAs.</title>
        <authorList>
            <person name="Ota T."/>
            <person name="Suzuki Y."/>
            <person name="Nishikawa T."/>
            <person name="Otsuki T."/>
            <person name="Sugiyama T."/>
            <person name="Irie R."/>
            <person name="Wakamatsu A."/>
            <person name="Hayashi K."/>
            <person name="Sato H."/>
            <person name="Nagai K."/>
            <person name="Kimura K."/>
            <person name="Makita H."/>
            <person name="Sekine M."/>
            <person name="Obayashi M."/>
            <person name="Nishi T."/>
            <person name="Shibahara T."/>
            <person name="Tanaka T."/>
            <person name="Ishii S."/>
            <person name="Yamamoto J."/>
            <person name="Saito K."/>
            <person name="Kawai Y."/>
            <person name="Isono Y."/>
            <person name="Nakamura Y."/>
            <person name="Nagahari K."/>
            <person name="Murakami K."/>
            <person name="Yasuda T."/>
            <person name="Iwayanagi T."/>
            <person name="Wagatsuma M."/>
            <person name="Shiratori A."/>
            <person name="Sudo H."/>
            <person name="Hosoiri T."/>
            <person name="Kaku Y."/>
            <person name="Kodaira H."/>
            <person name="Kondo H."/>
            <person name="Sugawara M."/>
            <person name="Takahashi M."/>
            <person name="Kanda K."/>
            <person name="Yokoi T."/>
            <person name="Furuya T."/>
            <person name="Kikkawa E."/>
            <person name="Omura Y."/>
            <person name="Abe K."/>
            <person name="Kamihara K."/>
            <person name="Katsuta N."/>
            <person name="Sato K."/>
            <person name="Tanikawa M."/>
            <person name="Yamazaki M."/>
            <person name="Ninomiya K."/>
            <person name="Ishibashi T."/>
            <person name="Yamashita H."/>
            <person name="Murakawa K."/>
            <person name="Fujimori K."/>
            <person name="Tanai H."/>
            <person name="Kimata M."/>
            <person name="Watanabe M."/>
            <person name="Hiraoka S."/>
            <person name="Chiba Y."/>
            <person name="Ishida S."/>
            <person name="Ono Y."/>
            <person name="Takiguchi S."/>
            <person name="Watanabe S."/>
            <person name="Yosida M."/>
            <person name="Hotuta T."/>
            <person name="Kusano J."/>
            <person name="Kanehori K."/>
            <person name="Takahashi-Fujii A."/>
            <person name="Hara H."/>
            <person name="Tanase T.-O."/>
            <person name="Nomura Y."/>
            <person name="Togiya S."/>
            <person name="Komai F."/>
            <person name="Hara R."/>
            <person name="Takeuchi K."/>
            <person name="Arita M."/>
            <person name="Imose N."/>
            <person name="Musashino K."/>
            <person name="Yuuki H."/>
            <person name="Oshima A."/>
            <person name="Sasaki N."/>
            <person name="Aotsuka S."/>
            <person name="Yoshikawa Y."/>
            <person name="Matsunawa H."/>
            <person name="Ichihara T."/>
            <person name="Shiohata N."/>
            <person name="Sano S."/>
            <person name="Moriya S."/>
            <person name="Momiyama H."/>
            <person name="Satoh N."/>
            <person name="Takami S."/>
            <person name="Terashima Y."/>
            <person name="Suzuki O."/>
            <person name="Nakagawa S."/>
            <person name="Senoh A."/>
            <person name="Mizoguchi H."/>
            <person name="Goto Y."/>
            <person name="Shimizu F."/>
            <person name="Wakebe H."/>
            <person name="Hishigaki H."/>
            <person name="Watanabe T."/>
            <person name="Sugiyama A."/>
            <person name="Takemoto M."/>
            <person name="Kawakami B."/>
            <person name="Yamazaki M."/>
            <person name="Watanabe K."/>
            <person name="Kumagai A."/>
            <person name="Itakura S."/>
            <person name="Fukuzumi Y."/>
            <person name="Fujimori Y."/>
            <person name="Komiyama M."/>
            <person name="Tashiro H."/>
            <person name="Tanigami A."/>
            <person name="Fujiwara T."/>
            <person name="Ono T."/>
            <person name="Yamada K."/>
            <person name="Fujii Y."/>
            <person name="Ozaki K."/>
            <person name="Hirao M."/>
            <person name="Ohmori Y."/>
            <person name="Kawabata A."/>
            <person name="Hikiji T."/>
            <person name="Kobatake N."/>
            <person name="Inagaki H."/>
            <person name="Ikema Y."/>
            <person name="Okamoto S."/>
            <person name="Okitani R."/>
            <person name="Kawakami T."/>
            <person name="Noguchi S."/>
            <person name="Itoh T."/>
            <person name="Shigeta K."/>
            <person name="Senba T."/>
            <person name="Matsumura K."/>
            <person name="Nakajima Y."/>
            <person name="Mizuno T."/>
            <person name="Morinaga M."/>
            <person name="Sasaki M."/>
            <person name="Togashi T."/>
            <person name="Oyama M."/>
            <person name="Hata H."/>
            <person name="Watanabe M."/>
            <person name="Komatsu T."/>
            <person name="Mizushima-Sugano J."/>
            <person name="Satoh T."/>
            <person name="Shirai Y."/>
            <person name="Takahashi Y."/>
            <person name="Nakagawa K."/>
            <person name="Okumura K."/>
            <person name="Nagase T."/>
            <person name="Nomura N."/>
            <person name="Kikuchi H."/>
            <person name="Masuho Y."/>
            <person name="Yamashita R."/>
            <person name="Nakai K."/>
            <person name="Yada T."/>
            <person name="Nakamura Y."/>
            <person name="Ohara O."/>
            <person name="Isogai T."/>
            <person name="Sugano S."/>
        </authorList>
    </citation>
    <scope>NUCLEOTIDE SEQUENCE [LARGE SCALE MRNA] (ISOFORM 3)</scope>
    <scope>NUCLEOTIDE SEQUENCE [LARGE SCALE MRNA] OF 713-1275 (ISOFORM 4)</scope>
    <scope>NUCLEOTIDE SEQUENCE [LARGE SCALE MRNA] OF 934-1595 (ISOFORM 1)</scope>
    <scope>NUCLEOTIDE SEQUENCE [LARGE SCALE MRNA] OF 2141-2752 (ISOFORM 2)</scope>
    <scope>VARIANT ILE-1354</scope>
    <source>
        <tissue>Brain</tissue>
        <tissue>Chondrocyte</tissue>
        <tissue>Hepatoma</tissue>
        <tissue>Lung</tissue>
        <tissue>Teratocarcinoma</tissue>
        <tissue>Testis</tissue>
    </source>
</reference>
<reference key="3">
    <citation type="journal article" date="2005" name="Nature">
        <title>DNA sequence and analysis of human chromosome 18.</title>
        <authorList>
            <person name="Nusbaum C."/>
            <person name="Zody M.C."/>
            <person name="Borowsky M.L."/>
            <person name="Kamal M."/>
            <person name="Kodira C.D."/>
            <person name="Taylor T.D."/>
            <person name="Whittaker C.A."/>
            <person name="Chang J.L."/>
            <person name="Cuomo C.A."/>
            <person name="Dewar K."/>
            <person name="FitzGerald M.G."/>
            <person name="Yang X."/>
            <person name="Abouelleil A."/>
            <person name="Allen N.R."/>
            <person name="Anderson S."/>
            <person name="Bloom T."/>
            <person name="Bugalter B."/>
            <person name="Butler J."/>
            <person name="Cook A."/>
            <person name="DeCaprio D."/>
            <person name="Engels R."/>
            <person name="Garber M."/>
            <person name="Gnirke A."/>
            <person name="Hafez N."/>
            <person name="Hall J.L."/>
            <person name="Norman C.H."/>
            <person name="Itoh T."/>
            <person name="Jaffe D.B."/>
            <person name="Kuroki Y."/>
            <person name="Lehoczky J."/>
            <person name="Lui A."/>
            <person name="Macdonald P."/>
            <person name="Mauceli E."/>
            <person name="Mikkelsen T.S."/>
            <person name="Naylor J.W."/>
            <person name="Nicol R."/>
            <person name="Nguyen C."/>
            <person name="Noguchi H."/>
            <person name="O'Leary S.B."/>
            <person name="Piqani B."/>
            <person name="Smith C.L."/>
            <person name="Talamas J.A."/>
            <person name="Topham K."/>
            <person name="Totoki Y."/>
            <person name="Toyoda A."/>
            <person name="Wain H.M."/>
            <person name="Young S.K."/>
            <person name="Zeng Q."/>
            <person name="Zimmer A.R."/>
            <person name="Fujiyama A."/>
            <person name="Hattori M."/>
            <person name="Birren B.W."/>
            <person name="Sakaki Y."/>
            <person name="Lander E.S."/>
        </authorList>
    </citation>
    <scope>NUCLEOTIDE SEQUENCE [LARGE SCALE GENOMIC DNA]</scope>
</reference>
<reference key="4">
    <citation type="journal article" date="2020" name="Nature">
        <title>PIEZO2 in sensory neurons and urothelial cells coordinates urination.</title>
        <authorList>
            <person name="Marshall K.L."/>
            <person name="Saade D."/>
            <person name="Ghitani N."/>
            <person name="Coombs A.M."/>
            <person name="Szczot M."/>
            <person name="Keller J."/>
            <person name="Ogata T."/>
            <person name="Daou I."/>
            <person name="Stowers L.T."/>
            <person name="Boennemann C.G."/>
            <person name="Chesler A.T."/>
            <person name="Patapoutian A."/>
        </authorList>
    </citation>
    <scope>FUNCTION</scope>
</reference>
<reference key="5">
    <citation type="journal article" date="2023" name="Science">
        <title>MyoD-family inhibitor proteins act as auxiliary subunits of Piezo channels.</title>
        <authorList>
            <person name="Zhou Z."/>
            <person name="Ma X."/>
            <person name="Lin Y."/>
            <person name="Cheng D."/>
            <person name="Bavi N."/>
            <person name="Secker G.A."/>
            <person name="Li J.V."/>
            <person name="Janbandhu V."/>
            <person name="Sutton D.L."/>
            <person name="Scott H.S."/>
            <person name="Yao M."/>
            <person name="Harvey R.P."/>
            <person name="Harvey N.L."/>
            <person name="Corry B."/>
            <person name="Zhang Y."/>
            <person name="Cox C.D."/>
        </authorList>
    </citation>
    <scope>FUNCTION</scope>
    <scope>ACTIVITY REGULATION</scope>
    <scope>SUBUNIT</scope>
    <scope>INTERACTION WITH MDFIC AND MDFI</scope>
</reference>
<reference key="6">
    <citation type="journal article" date="2017" name="Clin. Genet.">
        <title>Loss of the proprioception and touch sensation channel PIEZO2 in siblings with a progressive form of contractures.</title>
        <authorList>
            <person name="Mahmud A.A."/>
            <person name="Nahid N.A."/>
            <person name="Nassif C."/>
            <person name="Sayeed M.S."/>
            <person name="Ahmed M.U."/>
            <person name="Parveen M."/>
            <person name="Khalil M.I."/>
            <person name="Islam M.M."/>
            <person name="Nahar Z."/>
            <person name="Rypens F."/>
            <person name="Hamdan F.F."/>
            <person name="Rouleau G.A."/>
            <person name="Hasnat A."/>
            <person name="Michaud J.L."/>
        </authorList>
    </citation>
    <scope>INVOLVEMENT IN DAIPT</scope>
</reference>
<reference key="7">
    <citation type="journal article" date="2016" name="N. Engl. J. Med.">
        <title>The Role of PIEZO2 in Human Mechanosensation.</title>
        <authorList>
            <person name="Chesler A.T."/>
            <person name="Szczot M."/>
            <person name="Bharucha-Goebel D."/>
            <person name="Ceko M."/>
            <person name="Donkervoort S."/>
            <person name="Laubacher C."/>
            <person name="Hayes L.H."/>
            <person name="Alter K."/>
            <person name="Zampieri C."/>
            <person name="Stanley C."/>
            <person name="Innes A.M."/>
            <person name="Mah J.K."/>
            <person name="Grosmann C.M."/>
            <person name="Bradley N."/>
            <person name="Nguyen D."/>
            <person name="Foley A.R."/>
            <person name="Le Pichon C.E."/>
            <person name="Boennemann C.G."/>
        </authorList>
    </citation>
    <scope>INVOLVEMENT IN DAIPT</scope>
    <scope>VARIANT DAIPT PRO-1685</scope>
</reference>
<reference key="8">
    <citation type="journal article" date="2013" name="Proc. Natl. Acad. Sci. U.S.A.">
        <title>Gain-of-function mutations in the mechanically activated ion channel PIEZO2 cause a subtype of distal arthrogryposis.</title>
        <authorList>
            <person name="Coste B."/>
            <person name="Houge G."/>
            <person name="Murray M.F."/>
            <person name="Stitziel N."/>
            <person name="Bandell M."/>
            <person name="Giovanni M.A."/>
            <person name="Philippakis A."/>
            <person name="Hoischen A."/>
            <person name="Riemer G."/>
            <person name="Steen U."/>
            <person name="Steen V.M."/>
            <person name="Mathur J."/>
            <person name="Cox J."/>
            <person name="Lebo M."/>
            <person name="Rehm H."/>
            <person name="Weiss S.T."/>
            <person name="Wood J.N."/>
            <person name="Maas R.L."/>
            <person name="Sunyaev S.R."/>
            <person name="Patapoutian A."/>
        </authorList>
    </citation>
    <scope>VARIANTS DA5 PHE-802 AND GLU-2727 DEL</scope>
    <scope>CHARACTERIZATION OF VARIANTS DA5 PHE-802 AND GLU-2727 DEL</scope>
</reference>
<reference key="9">
    <citation type="journal article" date="2014" name="Am. J. Hum. Genet.">
        <title>Mutations in PIEZO2 cause Gordon syndrome, Marden-Walker syndrome, and distal arthrogryposis type 5.</title>
        <authorList>
            <consortium name="University of Washington Center for Mendelian Genomics"/>
            <person name="McMillin M.J."/>
            <person name="Beck A.E."/>
            <person name="Chong J.X."/>
            <person name="Shively K.M."/>
            <person name="Buckingham K.J."/>
            <person name="Gildersleeve H.I."/>
            <person name="Aracena M.I."/>
            <person name="Aylsworth A.S."/>
            <person name="Bitoun P."/>
            <person name="Carey J.C."/>
            <person name="Clericuzio C.L."/>
            <person name="Crow Y.J."/>
            <person name="Curry C.J."/>
            <person name="Devriendt K."/>
            <person name="Everman D.B."/>
            <person name="Fryer A."/>
            <person name="Gibson K."/>
            <person name="Giovannucci Uzielli M.L."/>
            <person name="Graham J.M. Jr."/>
            <person name="Hall J.G."/>
            <person name="Hecht J.T."/>
            <person name="Heidenreich R.A."/>
            <person name="Hurst J.A."/>
            <person name="Irani S."/>
            <person name="Krapels I.P."/>
            <person name="Leroy J.G."/>
            <person name="Mowat D."/>
            <person name="Plant G.T."/>
            <person name="Robertson S.P."/>
            <person name="Schorry E.K."/>
            <person name="Scott R.H."/>
            <person name="Seaver L.H."/>
            <person name="Sherr E."/>
            <person name="Splitt M."/>
            <person name="Stewart H."/>
            <person name="Stumpel C."/>
            <person name="Temel S.G."/>
            <person name="Weaver D.D."/>
            <person name="Whiteford M."/>
            <person name="Williams M.S."/>
            <person name="Tabor H.K."/>
            <person name="Smith J.D."/>
            <person name="Shendure J."/>
            <person name="Nickerson D.A."/>
            <person name="Bamshad M.J."/>
        </authorList>
    </citation>
    <scope>INVOLVEMENT IN DA3; DA5 AND MWKS</scope>
    <scope>VARIANT MWKS CYS-2686</scope>
    <scope>VARIANT DA3 HIS-2686</scope>
    <scope>VARIANTS DA5 VAL-712; LEU-2718; PRO-2718 AND PRO-2739</scope>
</reference>
<organism>
    <name type="scientific">Homo sapiens</name>
    <name type="common">Human</name>
    <dbReference type="NCBI Taxonomy" id="9606"/>
    <lineage>
        <taxon>Eukaryota</taxon>
        <taxon>Metazoa</taxon>
        <taxon>Chordata</taxon>
        <taxon>Craniata</taxon>
        <taxon>Vertebrata</taxon>
        <taxon>Euteleostomi</taxon>
        <taxon>Mammalia</taxon>
        <taxon>Eutheria</taxon>
        <taxon>Euarchontoglires</taxon>
        <taxon>Primates</taxon>
        <taxon>Haplorrhini</taxon>
        <taxon>Catarrhini</taxon>
        <taxon>Hominidae</taxon>
        <taxon>Homo</taxon>
    </lineage>
</organism>